<comment type="function">
    <text evidence="1 4">Substrate-specific adapter of a BCR (BTB-CUL3-RBX1) E3 ubiquitin ligase complex that regulates the response to oxidative stress by targeting nfe2l2/nrf2 for ubiquitination (PubMed:18057000). Keap1 acts as a key sensor of oxidative and electrophilic stress: in normal conditions, the BCR(KEAP1) complex mediates ubiquitination and degradation of nfe2l2/nrf2, a transcription factor regulating expression of many cytoprotective genes (PubMed:18057000). In response to oxidative stress, different electrophile metabolites trigger non-enzymatic covalent modifications of highly reactive cysteine residues in KEAP1, leading to inactivate the ubiquitin ligase activity of the BCR(KEAP1) complex, promoting nfe2l2/nrf2 nuclear accumulation and expression of phase II detoxifying enzymes (By similarity).</text>
</comment>
<comment type="activity regulation">
    <text evidence="1">Ubiquitin ligase activity of the BCR(KEAP1) complex is inhibited by oxidative stress and electrophile metabolites such as sulforaphane. Electrophile metabolites react with reactive cysteine residues in keap1 and trigger non-enzymatic covalent modifications of these cysteine residues, leading to inactivate the ubiquitin ligase activity of the BCR(KEAP1) complex.</text>
</comment>
<comment type="pathway">
    <text evidence="1">Protein modification; protein ubiquitination.</text>
</comment>
<comment type="subunit">
    <text evidence="1 4">Homodimer and heterodimer; heterodimerizes with keap1b (PubMed:18057000). Component of the BCR(KEAP1) E3 ubiquitin ligase complex, at least composed of 2 molecules of cul3, 2 molecules of keap1 (keap1a and/or keap1b), and rbx1 (By similarity). Interacts with nfe2l2/nrf2; the interaction is direct (By similarity).</text>
</comment>
<comment type="subcellular location">
    <subcellularLocation>
        <location evidence="1">Cytoplasm</location>
    </subcellularLocation>
    <subcellularLocation>
        <location evidence="1">Nucleus</location>
    </subcellularLocation>
    <text evidence="1">Mainly cytoplasmic.</text>
</comment>
<comment type="tissue specificity">
    <text evidence="4">Widely expressed.</text>
</comment>
<comment type="domain">
    <text evidence="4">Keap1 contains reactive cysteine residues that act as sensors for endogenously produced and exogenously encountered small molecules, which react with sulfhydryl groups and modify the cysteine sensors, leading to impair ability of the BCR(KEAP1) complex to ubiquitinate target proteins.</text>
</comment>
<comment type="PTM">
    <text evidence="1">Non-enzymatic covalent modifications of reactive cysteines by electrophile metabolites inactivate the BCR(KEAP1) complex.</text>
</comment>
<comment type="similarity">
    <text evidence="6">Belongs to the KEAP1 family.</text>
</comment>
<evidence type="ECO:0000250" key="1">
    <source>
        <dbReference type="UniProtKB" id="Q9Z2X8"/>
    </source>
</evidence>
<evidence type="ECO:0000255" key="2"/>
<evidence type="ECO:0000255" key="3">
    <source>
        <dbReference type="PROSITE-ProRule" id="PRU00037"/>
    </source>
</evidence>
<evidence type="ECO:0000269" key="4">
    <source>
    </source>
</evidence>
<evidence type="ECO:0000303" key="5">
    <source>
    </source>
</evidence>
<evidence type="ECO:0000305" key="6"/>
<evidence type="ECO:0000312" key="7">
    <source>
        <dbReference type="ZFIN" id="ZDB-GENE-030131-556"/>
    </source>
</evidence>
<name>KEP1A_DANRE</name>
<reference key="1">
    <citation type="journal article" date="2008" name="J. Biol. Chem.">
        <title>Molecular evolution of Keap1. Two Keap1 molecules with distinctive intervening region structures are conserved among fish.</title>
        <authorList>
            <person name="Li L."/>
            <person name="Kobayashi M."/>
            <person name="Kaneko H."/>
            <person name="Nakajima-Takagi Y."/>
            <person name="Nakayama Y."/>
            <person name="Yamamoto M."/>
        </authorList>
    </citation>
    <scope>NUCLEOTIDE SEQUENCE [MRNA]</scope>
    <scope>FUNCTION</scope>
    <scope>SUBUNIT</scope>
    <scope>DOMAIN</scope>
    <scope>TISSUE SPECIFICITY</scope>
    <scope>MUTAGENESIS OF CYS-264</scope>
</reference>
<reference key="2">
    <citation type="journal article" date="2013" name="Nature">
        <title>The zebrafish reference genome sequence and its relationship to the human genome.</title>
        <authorList>
            <person name="Howe K."/>
            <person name="Clark M.D."/>
            <person name="Torroja C.F."/>
            <person name="Torrance J."/>
            <person name="Berthelot C."/>
            <person name="Muffato M."/>
            <person name="Collins J.E."/>
            <person name="Humphray S."/>
            <person name="McLaren K."/>
            <person name="Matthews L."/>
            <person name="McLaren S."/>
            <person name="Sealy I."/>
            <person name="Caccamo M."/>
            <person name="Churcher C."/>
            <person name="Scott C."/>
            <person name="Barrett J.C."/>
            <person name="Koch R."/>
            <person name="Rauch G.J."/>
            <person name="White S."/>
            <person name="Chow W."/>
            <person name="Kilian B."/>
            <person name="Quintais L.T."/>
            <person name="Guerra-Assuncao J.A."/>
            <person name="Zhou Y."/>
            <person name="Gu Y."/>
            <person name="Yen J."/>
            <person name="Vogel J.H."/>
            <person name="Eyre T."/>
            <person name="Redmond S."/>
            <person name="Banerjee R."/>
            <person name="Chi J."/>
            <person name="Fu B."/>
            <person name="Langley E."/>
            <person name="Maguire S.F."/>
            <person name="Laird G.K."/>
            <person name="Lloyd D."/>
            <person name="Kenyon E."/>
            <person name="Donaldson S."/>
            <person name="Sehra H."/>
            <person name="Almeida-King J."/>
            <person name="Loveland J."/>
            <person name="Trevanion S."/>
            <person name="Jones M."/>
            <person name="Quail M."/>
            <person name="Willey D."/>
            <person name="Hunt A."/>
            <person name="Burton J."/>
            <person name="Sims S."/>
            <person name="McLay K."/>
            <person name="Plumb B."/>
            <person name="Davis J."/>
            <person name="Clee C."/>
            <person name="Oliver K."/>
            <person name="Clark R."/>
            <person name="Riddle C."/>
            <person name="Elliot D."/>
            <person name="Threadgold G."/>
            <person name="Harden G."/>
            <person name="Ware D."/>
            <person name="Begum S."/>
            <person name="Mortimore B."/>
            <person name="Kerry G."/>
            <person name="Heath P."/>
            <person name="Phillimore B."/>
            <person name="Tracey A."/>
            <person name="Corby N."/>
            <person name="Dunn M."/>
            <person name="Johnson C."/>
            <person name="Wood J."/>
            <person name="Clark S."/>
            <person name="Pelan S."/>
            <person name="Griffiths G."/>
            <person name="Smith M."/>
            <person name="Glithero R."/>
            <person name="Howden P."/>
            <person name="Barker N."/>
            <person name="Lloyd C."/>
            <person name="Stevens C."/>
            <person name="Harley J."/>
            <person name="Holt K."/>
            <person name="Panagiotidis G."/>
            <person name="Lovell J."/>
            <person name="Beasley H."/>
            <person name="Henderson C."/>
            <person name="Gordon D."/>
            <person name="Auger K."/>
            <person name="Wright D."/>
            <person name="Collins J."/>
            <person name="Raisen C."/>
            <person name="Dyer L."/>
            <person name="Leung K."/>
            <person name="Robertson L."/>
            <person name="Ambridge K."/>
            <person name="Leongamornlert D."/>
            <person name="McGuire S."/>
            <person name="Gilderthorp R."/>
            <person name="Griffiths C."/>
            <person name="Manthravadi D."/>
            <person name="Nichol S."/>
            <person name="Barker G."/>
            <person name="Whitehead S."/>
            <person name="Kay M."/>
            <person name="Brown J."/>
            <person name="Murnane C."/>
            <person name="Gray E."/>
            <person name="Humphries M."/>
            <person name="Sycamore N."/>
            <person name="Barker D."/>
            <person name="Saunders D."/>
            <person name="Wallis J."/>
            <person name="Babbage A."/>
            <person name="Hammond S."/>
            <person name="Mashreghi-Mohammadi M."/>
            <person name="Barr L."/>
            <person name="Martin S."/>
            <person name="Wray P."/>
            <person name="Ellington A."/>
            <person name="Matthews N."/>
            <person name="Ellwood M."/>
            <person name="Woodmansey R."/>
            <person name="Clark G."/>
            <person name="Cooper J."/>
            <person name="Tromans A."/>
            <person name="Grafham D."/>
            <person name="Skuce C."/>
            <person name="Pandian R."/>
            <person name="Andrews R."/>
            <person name="Harrison E."/>
            <person name="Kimberley A."/>
            <person name="Garnett J."/>
            <person name="Fosker N."/>
            <person name="Hall R."/>
            <person name="Garner P."/>
            <person name="Kelly D."/>
            <person name="Bird C."/>
            <person name="Palmer S."/>
            <person name="Gehring I."/>
            <person name="Berger A."/>
            <person name="Dooley C.M."/>
            <person name="Ersan-Urun Z."/>
            <person name="Eser C."/>
            <person name="Geiger H."/>
            <person name="Geisler M."/>
            <person name="Karotki L."/>
            <person name="Kirn A."/>
            <person name="Konantz J."/>
            <person name="Konantz M."/>
            <person name="Oberlander M."/>
            <person name="Rudolph-Geiger S."/>
            <person name="Teucke M."/>
            <person name="Lanz C."/>
            <person name="Raddatz G."/>
            <person name="Osoegawa K."/>
            <person name="Zhu B."/>
            <person name="Rapp A."/>
            <person name="Widaa S."/>
            <person name="Langford C."/>
            <person name="Yang F."/>
            <person name="Schuster S.C."/>
            <person name="Carter N.P."/>
            <person name="Harrow J."/>
            <person name="Ning Z."/>
            <person name="Herrero J."/>
            <person name="Searle S.M."/>
            <person name="Enright A."/>
            <person name="Geisler R."/>
            <person name="Plasterk R.H."/>
            <person name="Lee C."/>
            <person name="Westerfield M."/>
            <person name="de Jong P.J."/>
            <person name="Zon L.I."/>
            <person name="Postlethwait J.H."/>
            <person name="Nusslein-Volhard C."/>
            <person name="Hubbard T.J."/>
            <person name="Roest Crollius H."/>
            <person name="Rogers J."/>
            <person name="Stemple D.L."/>
        </authorList>
    </citation>
    <scope>NUCLEOTIDE SEQUENCE [LARGE SCALE GENOMIC DNA]</scope>
    <source>
        <strain>Tuebingen</strain>
    </source>
</reference>
<reference key="3">
    <citation type="submission" date="2006-06" db="EMBL/GenBank/DDBJ databases">
        <authorList>
            <consortium name="NIH - Zebrafish Gene Collection (ZGC) project"/>
        </authorList>
    </citation>
    <scope>NUCLEOTIDE SEQUENCE [LARGE SCALE MRNA]</scope>
    <source>
        <strain>AB</strain>
    </source>
</reference>
<protein>
    <recommendedName>
        <fullName evidence="5">Kelch-like ECH-associated protein 1A</fullName>
    </recommendedName>
</protein>
<sequence length="601" mass="67405">MICPRKKRPIKDEDFSAIVVPSMRGHGYLDYTVESHPSKALQNMDELRHHEMLCDLVLHVTYKDKIVDFKVHKLVLAASSPYFKAMFTSNFKECHASEVTLRDVCPQVISRLIDFAYTSRITVGETCVLHVLLTAMRYQMEEVAKACCDFLMKNLEPSNVIGISRFAEEIGCTDLHLRTREYINTHFNEVTKEEEFFSLSHCQLLELISQDSLKVLCESEVYKACIDWVRWDAESRAQYFHALLNAVHIYALPPTFLKRQLQSCPILSKANSCKDFLSKIFHEMALRKPLPPTPHRGTQLIYIAGGYKQHSLDTLEAFDPHKNVWLKLGSMMSPCSGLGACVLFGLLYTVGGRNLSLQNNTESGSLSCYNPMTNQWTQLAPLNTPRNRVGVGVIDGSIYAVGGSHASTHHNSVERYDPETNRWTFVAPMSVARLGAGVAACGGCLYVVGGFDGDNRWNTVERYQPDTNTWQHVAPMNTVRSGLGVVCMDNYLYAVGGYDGQTQLKTMERYNITRDVWEPMASMNHCRSAHGVSVYQCKIFVLGGFNQGGFLSSVECYCPASNVWTLVTDMPVGRSGMGVAVTMEPCPGILPEEEEEVDEEM</sequence>
<feature type="chain" id="PRO_0000448289" description="Kelch-like ECH-associated protein 1A">
    <location>
        <begin position="1"/>
        <end position="601"/>
    </location>
</feature>
<feature type="domain" description="BTB" evidence="3">
    <location>
        <begin position="44"/>
        <end position="117"/>
    </location>
</feature>
<feature type="domain" description="BACK" evidence="2">
    <location>
        <begin position="153"/>
        <end position="253"/>
    </location>
</feature>
<feature type="repeat" description="Kelch 1" evidence="2">
    <location>
        <begin position="292"/>
        <end position="337"/>
    </location>
</feature>
<feature type="repeat" description="Kelch 2" evidence="2">
    <location>
        <begin position="338"/>
        <end position="388"/>
    </location>
</feature>
<feature type="repeat" description="Kelch 3" evidence="2">
    <location>
        <begin position="389"/>
        <end position="435"/>
    </location>
</feature>
<feature type="repeat" description="Kelch 4" evidence="2">
    <location>
        <begin position="436"/>
        <end position="482"/>
    </location>
</feature>
<feature type="repeat" description="Kelch 5" evidence="2">
    <location>
        <begin position="484"/>
        <end position="529"/>
    </location>
</feature>
<feature type="repeat" description="Kelch 6" evidence="2">
    <location>
        <begin position="530"/>
        <end position="576"/>
    </location>
</feature>
<feature type="site" description="Sensor for electrophilic agents" evidence="1">
    <location>
        <position position="127"/>
    </location>
</feature>
<feature type="site" description="Sensor for electrophilic agents" evidence="4">
    <location>
        <position position="264"/>
    </location>
</feature>
<feature type="mutagenesis site" description="Abolishes repression of nfe2l2/nrf2-dependent gene expression." evidence="4">
    <original>C</original>
    <variation>S</variation>
    <location>
        <position position="264"/>
    </location>
</feature>
<feature type="sequence conflict" description="In Ref. 1; BAC10574." evidence="6" ref="1">
    <original>L</original>
    <variation>M</variation>
    <location>
        <position position="47"/>
    </location>
</feature>
<organism>
    <name type="scientific">Danio rerio</name>
    <name type="common">Zebrafish</name>
    <name type="synonym">Brachydanio rerio</name>
    <dbReference type="NCBI Taxonomy" id="7955"/>
    <lineage>
        <taxon>Eukaryota</taxon>
        <taxon>Metazoa</taxon>
        <taxon>Chordata</taxon>
        <taxon>Craniata</taxon>
        <taxon>Vertebrata</taxon>
        <taxon>Euteleostomi</taxon>
        <taxon>Actinopterygii</taxon>
        <taxon>Neopterygii</taxon>
        <taxon>Teleostei</taxon>
        <taxon>Ostariophysi</taxon>
        <taxon>Cypriniformes</taxon>
        <taxon>Danionidae</taxon>
        <taxon>Danioninae</taxon>
        <taxon>Danio</taxon>
    </lineage>
</organism>
<keyword id="KW-0963">Cytoplasm</keyword>
<keyword id="KW-0880">Kelch repeat</keyword>
<keyword id="KW-0539">Nucleus</keyword>
<keyword id="KW-1185">Reference proteome</keyword>
<keyword id="KW-0677">Repeat</keyword>
<keyword id="KW-0833">Ubl conjugation pathway</keyword>
<dbReference type="EMBL" id="AB081315">
    <property type="protein sequence ID" value="BAC10574.2"/>
    <property type="molecule type" value="mRNA"/>
</dbReference>
<dbReference type="EMBL" id="BX663525">
    <property type="status" value="NOT_ANNOTATED_CDS"/>
    <property type="molecule type" value="Genomic_DNA"/>
</dbReference>
<dbReference type="EMBL" id="BX927124">
    <property type="status" value="NOT_ANNOTATED_CDS"/>
    <property type="molecule type" value="Genomic_DNA"/>
</dbReference>
<dbReference type="EMBL" id="BC117613">
    <property type="protein sequence ID" value="AAI17614.1"/>
    <property type="molecule type" value="mRNA"/>
</dbReference>
<dbReference type="RefSeq" id="NP_878284.2">
    <property type="nucleotide sequence ID" value="NM_182864.2"/>
</dbReference>
<dbReference type="SMR" id="Q1ECZ2"/>
<dbReference type="STRING" id="7955.ENSDARP00000045762"/>
<dbReference type="PaxDb" id="7955-ENSDARP00000045762"/>
<dbReference type="Ensembl" id="ENSDART00000045763">
    <property type="protein sequence ID" value="ENSDARP00000045762"/>
    <property type="gene ID" value="ENSDARG00000016132"/>
</dbReference>
<dbReference type="GeneID" id="321837"/>
<dbReference type="KEGG" id="dre:321837"/>
<dbReference type="AGR" id="ZFIN:ZDB-GENE-030131-556"/>
<dbReference type="CTD" id="321837"/>
<dbReference type="ZFIN" id="ZDB-GENE-030131-556">
    <property type="gene designation" value="keap1a"/>
</dbReference>
<dbReference type="eggNOG" id="KOG4441">
    <property type="taxonomic scope" value="Eukaryota"/>
</dbReference>
<dbReference type="HOGENOM" id="CLU_004253_14_2_1"/>
<dbReference type="InParanoid" id="Q1ECZ2"/>
<dbReference type="OMA" id="FDGENRW"/>
<dbReference type="OrthoDB" id="45365at2759"/>
<dbReference type="PhylomeDB" id="Q1ECZ2"/>
<dbReference type="TreeFam" id="TF329218"/>
<dbReference type="UniPathway" id="UPA00143"/>
<dbReference type="PRO" id="PR:Q1ECZ2"/>
<dbReference type="Proteomes" id="UP000000437">
    <property type="component" value="Chromosome 2"/>
</dbReference>
<dbReference type="Bgee" id="ENSDARG00000016132">
    <property type="expression patterns" value="Expressed in liver and 23 other cell types or tissues"/>
</dbReference>
<dbReference type="GO" id="GO:0031463">
    <property type="term" value="C:Cul3-RING ubiquitin ligase complex"/>
    <property type="evidence" value="ECO:0000318"/>
    <property type="project" value="GO_Central"/>
</dbReference>
<dbReference type="GO" id="GO:0005737">
    <property type="term" value="C:cytoplasm"/>
    <property type="evidence" value="ECO:0000250"/>
    <property type="project" value="UniProtKB"/>
</dbReference>
<dbReference type="GO" id="GO:0016234">
    <property type="term" value="C:inclusion body"/>
    <property type="evidence" value="ECO:0000250"/>
    <property type="project" value="UniProtKB"/>
</dbReference>
<dbReference type="GO" id="GO:0005634">
    <property type="term" value="C:nucleus"/>
    <property type="evidence" value="ECO:0007669"/>
    <property type="project" value="UniProtKB-SubCell"/>
</dbReference>
<dbReference type="GO" id="GO:1990756">
    <property type="term" value="F:ubiquitin-like ligase-substrate adaptor activity"/>
    <property type="evidence" value="ECO:0000318"/>
    <property type="project" value="GO_Central"/>
</dbReference>
<dbReference type="GO" id="GO:0034599">
    <property type="term" value="P:cellular response to oxidative stress"/>
    <property type="evidence" value="ECO:0000250"/>
    <property type="project" value="UniProtKB"/>
</dbReference>
<dbReference type="GO" id="GO:0071379">
    <property type="term" value="P:cellular response to prostaglandin stimulus"/>
    <property type="evidence" value="ECO:0000316"/>
    <property type="project" value="ZFIN"/>
</dbReference>
<dbReference type="GO" id="GO:0071466">
    <property type="term" value="P:cellular response to xenobiotic stimulus"/>
    <property type="evidence" value="ECO:0000316"/>
    <property type="project" value="ZFIN"/>
</dbReference>
<dbReference type="GO" id="GO:0030536">
    <property type="term" value="P:larval feeding behavior"/>
    <property type="evidence" value="ECO:0000316"/>
    <property type="project" value="ZFIN"/>
</dbReference>
<dbReference type="GO" id="GO:0043161">
    <property type="term" value="P:proteasome-mediated ubiquitin-dependent protein catabolic process"/>
    <property type="evidence" value="ECO:0000318"/>
    <property type="project" value="GO_Central"/>
</dbReference>
<dbReference type="GO" id="GO:0016567">
    <property type="term" value="P:protein ubiquitination"/>
    <property type="evidence" value="ECO:0000315"/>
    <property type="project" value="UniProtKB"/>
</dbReference>
<dbReference type="GO" id="GO:0010506">
    <property type="term" value="P:regulation of autophagy"/>
    <property type="evidence" value="ECO:0000250"/>
    <property type="project" value="UniProtKB"/>
</dbReference>
<dbReference type="GO" id="GO:0006511">
    <property type="term" value="P:ubiquitin-dependent protein catabolic process"/>
    <property type="evidence" value="ECO:0000315"/>
    <property type="project" value="UniProtKB"/>
</dbReference>
<dbReference type="CDD" id="cd18458">
    <property type="entry name" value="BACK_KLHL19_KEAP1"/>
    <property type="match status" value="1"/>
</dbReference>
<dbReference type="CDD" id="cd18248">
    <property type="entry name" value="BTB_POZ_KLHL19_KEAP1"/>
    <property type="match status" value="1"/>
</dbReference>
<dbReference type="FunFam" id="2.120.10.80:FF:000024">
    <property type="entry name" value="Kelch-like ECH-associated protein 1"/>
    <property type="match status" value="1"/>
</dbReference>
<dbReference type="FunFam" id="1.25.40.420:FF:000001">
    <property type="entry name" value="Kelch-like family member 12"/>
    <property type="match status" value="1"/>
</dbReference>
<dbReference type="FunFam" id="3.30.710.10:FF:000001">
    <property type="entry name" value="Kelch-like family member 20"/>
    <property type="match status" value="1"/>
</dbReference>
<dbReference type="Gene3D" id="1.25.40.420">
    <property type="match status" value="1"/>
</dbReference>
<dbReference type="Gene3D" id="2.120.10.80">
    <property type="entry name" value="Kelch-type beta propeller"/>
    <property type="match status" value="1"/>
</dbReference>
<dbReference type="Gene3D" id="3.30.710.10">
    <property type="entry name" value="Potassium Channel Kv1.1, Chain A"/>
    <property type="match status" value="1"/>
</dbReference>
<dbReference type="InterPro" id="IPR011705">
    <property type="entry name" value="BACK"/>
</dbReference>
<dbReference type="InterPro" id="IPR017096">
    <property type="entry name" value="BTB-kelch_protein"/>
</dbReference>
<dbReference type="InterPro" id="IPR000210">
    <property type="entry name" value="BTB/POZ_dom"/>
</dbReference>
<dbReference type="InterPro" id="IPR047098">
    <property type="entry name" value="KEAP1_BACK"/>
</dbReference>
<dbReference type="InterPro" id="IPR030563">
    <property type="entry name" value="KEAP1_BTB_POZ_dom"/>
</dbReference>
<dbReference type="InterPro" id="IPR015915">
    <property type="entry name" value="Kelch-typ_b-propeller"/>
</dbReference>
<dbReference type="InterPro" id="IPR006652">
    <property type="entry name" value="Kelch_1"/>
</dbReference>
<dbReference type="InterPro" id="IPR011333">
    <property type="entry name" value="SKP1/BTB/POZ_sf"/>
</dbReference>
<dbReference type="PANTHER" id="PTHR45632:SF13">
    <property type="entry name" value="KELCH-LIKE PROTEIN 26"/>
    <property type="match status" value="1"/>
</dbReference>
<dbReference type="PANTHER" id="PTHR45632">
    <property type="entry name" value="LD33804P"/>
    <property type="match status" value="1"/>
</dbReference>
<dbReference type="Pfam" id="PF07707">
    <property type="entry name" value="BACK"/>
    <property type="match status" value="1"/>
</dbReference>
<dbReference type="Pfam" id="PF00651">
    <property type="entry name" value="BTB"/>
    <property type="match status" value="1"/>
</dbReference>
<dbReference type="Pfam" id="PF01344">
    <property type="entry name" value="Kelch_1"/>
    <property type="match status" value="3"/>
</dbReference>
<dbReference type="Pfam" id="PF24681">
    <property type="entry name" value="Kelch_KLHDC2_KLHL20_DRC7"/>
    <property type="match status" value="1"/>
</dbReference>
<dbReference type="PIRSF" id="PIRSF037037">
    <property type="entry name" value="Kelch-like_protein_gigaxonin"/>
    <property type="match status" value="1"/>
</dbReference>
<dbReference type="SMART" id="SM00875">
    <property type="entry name" value="BACK"/>
    <property type="match status" value="1"/>
</dbReference>
<dbReference type="SMART" id="SM00225">
    <property type="entry name" value="BTB"/>
    <property type="match status" value="1"/>
</dbReference>
<dbReference type="SMART" id="SM00612">
    <property type="entry name" value="Kelch"/>
    <property type="match status" value="6"/>
</dbReference>
<dbReference type="SUPFAM" id="SSF117281">
    <property type="entry name" value="Kelch motif"/>
    <property type="match status" value="1"/>
</dbReference>
<dbReference type="SUPFAM" id="SSF54695">
    <property type="entry name" value="POZ domain"/>
    <property type="match status" value="1"/>
</dbReference>
<dbReference type="PROSITE" id="PS50097">
    <property type="entry name" value="BTB"/>
    <property type="match status" value="1"/>
</dbReference>
<proteinExistence type="evidence at protein level"/>
<gene>
    <name evidence="5 7" type="primary">keap1a</name>
</gene>
<accession>Q1ECZ2</accession>
<accession>Q8JIM0</accession>